<organism>
    <name type="scientific">Rickettsia prowazekii (strain Madrid E)</name>
    <dbReference type="NCBI Taxonomy" id="272947"/>
    <lineage>
        <taxon>Bacteria</taxon>
        <taxon>Pseudomonadati</taxon>
        <taxon>Pseudomonadota</taxon>
        <taxon>Alphaproteobacteria</taxon>
        <taxon>Rickettsiales</taxon>
        <taxon>Rickettsiaceae</taxon>
        <taxon>Rickettsieae</taxon>
        <taxon>Rickettsia</taxon>
        <taxon>typhus group</taxon>
    </lineage>
</organism>
<protein>
    <recommendedName>
        <fullName evidence="1">DNA ligase</fullName>
        <ecNumber evidence="1">6.5.1.2</ecNumber>
    </recommendedName>
    <alternativeName>
        <fullName evidence="1">Polydeoxyribonucleotide synthase [NAD(+)]</fullName>
    </alternativeName>
</protein>
<feature type="chain" id="PRO_0000161755" description="DNA ligase">
    <location>
        <begin position="1"/>
        <end position="689"/>
    </location>
</feature>
<feature type="domain" description="BRCT" evidence="1">
    <location>
        <begin position="610"/>
        <end position="689"/>
    </location>
</feature>
<feature type="active site" description="N6-AMP-lysine intermediate" evidence="1">
    <location>
        <position position="123"/>
    </location>
</feature>
<feature type="binding site" evidence="1">
    <location>
        <begin position="40"/>
        <end position="44"/>
    </location>
    <ligand>
        <name>NAD(+)</name>
        <dbReference type="ChEBI" id="CHEBI:57540"/>
    </ligand>
</feature>
<feature type="binding site" evidence="1">
    <location>
        <begin position="89"/>
        <end position="90"/>
    </location>
    <ligand>
        <name>NAD(+)</name>
        <dbReference type="ChEBI" id="CHEBI:57540"/>
    </ligand>
</feature>
<feature type="binding site" evidence="1">
    <location>
        <position position="121"/>
    </location>
    <ligand>
        <name>NAD(+)</name>
        <dbReference type="ChEBI" id="CHEBI:57540"/>
    </ligand>
</feature>
<feature type="binding site" evidence="1">
    <location>
        <position position="144"/>
    </location>
    <ligand>
        <name>NAD(+)</name>
        <dbReference type="ChEBI" id="CHEBI:57540"/>
    </ligand>
</feature>
<feature type="binding site" evidence="1">
    <location>
        <position position="179"/>
    </location>
    <ligand>
        <name>NAD(+)</name>
        <dbReference type="ChEBI" id="CHEBI:57540"/>
    </ligand>
</feature>
<feature type="binding site" evidence="1">
    <location>
        <position position="295"/>
    </location>
    <ligand>
        <name>NAD(+)</name>
        <dbReference type="ChEBI" id="CHEBI:57540"/>
    </ligand>
</feature>
<feature type="binding site" evidence="1">
    <location>
        <position position="319"/>
    </location>
    <ligand>
        <name>NAD(+)</name>
        <dbReference type="ChEBI" id="CHEBI:57540"/>
    </ligand>
</feature>
<feature type="binding site" evidence="1">
    <location>
        <position position="413"/>
    </location>
    <ligand>
        <name>Zn(2+)</name>
        <dbReference type="ChEBI" id="CHEBI:29105"/>
    </ligand>
</feature>
<feature type="binding site" evidence="1">
    <location>
        <position position="416"/>
    </location>
    <ligand>
        <name>Zn(2+)</name>
        <dbReference type="ChEBI" id="CHEBI:29105"/>
    </ligand>
</feature>
<feature type="binding site" evidence="1">
    <location>
        <position position="431"/>
    </location>
    <ligand>
        <name>Zn(2+)</name>
        <dbReference type="ChEBI" id="CHEBI:29105"/>
    </ligand>
</feature>
<feature type="binding site" evidence="1">
    <location>
        <position position="437"/>
    </location>
    <ligand>
        <name>Zn(2+)</name>
        <dbReference type="ChEBI" id="CHEBI:29105"/>
    </ligand>
</feature>
<comment type="function">
    <text evidence="1">DNA ligase that catalyzes the formation of phosphodiester linkages between 5'-phosphoryl and 3'-hydroxyl groups in double-stranded DNA using NAD as a coenzyme and as the energy source for the reaction. It is essential for DNA replication and repair of damaged DNA.</text>
</comment>
<comment type="catalytic activity">
    <reaction evidence="1">
        <text>NAD(+) + (deoxyribonucleotide)n-3'-hydroxyl + 5'-phospho-(deoxyribonucleotide)m = (deoxyribonucleotide)n+m + AMP + beta-nicotinamide D-nucleotide.</text>
        <dbReference type="EC" id="6.5.1.2"/>
    </reaction>
</comment>
<comment type="cofactor">
    <cofactor evidence="1">
        <name>Mg(2+)</name>
        <dbReference type="ChEBI" id="CHEBI:18420"/>
    </cofactor>
    <cofactor evidence="1">
        <name>Mn(2+)</name>
        <dbReference type="ChEBI" id="CHEBI:29035"/>
    </cofactor>
</comment>
<comment type="similarity">
    <text evidence="1">Belongs to the NAD-dependent DNA ligase family. LigA subfamily.</text>
</comment>
<evidence type="ECO:0000255" key="1">
    <source>
        <dbReference type="HAMAP-Rule" id="MF_01588"/>
    </source>
</evidence>
<keyword id="KW-0227">DNA damage</keyword>
<keyword id="KW-0234">DNA repair</keyword>
<keyword id="KW-0235">DNA replication</keyword>
<keyword id="KW-0436">Ligase</keyword>
<keyword id="KW-0460">Magnesium</keyword>
<keyword id="KW-0464">Manganese</keyword>
<keyword id="KW-0479">Metal-binding</keyword>
<keyword id="KW-0520">NAD</keyword>
<keyword id="KW-1185">Reference proteome</keyword>
<keyword id="KW-0862">Zinc</keyword>
<sequence>MQNIDLISEQEAKKLLKELADKIAMYNHAYYIEDNPLVSDSEYDQLFNINLKLENTFPHLVLSNSPSKKVGANITNKFAKVIHQAPMLSLSNAFDEDDLRDFLERIKNFLRINEFTPIFCEPKIDGVSFSAIYKNGLFITGATRGDGYVGEDITMNIKTIKNFPHKIDNAPEFLEVRGEIYIEKQDFLNLNKEQEAQNRGKFANPRNAAAGSIRQLDVAITAQRPLKYFIYSGGVTEQNLASTQEQLLTKLKALSFSVNEISKLASSEEEIFAFYEYLKTNRHNLPYEIDGVVYKLNNFAMQNRMGFIARSPRFAIAHKFPAIIGQTKLLSITVQVGRTGMLTPVAELDPIEIGGVVVSRATLHNFQDIARKDVRIKDYVFLQRAGDVIPQITGVDISKRSNDTVKFDTPVFCPSCNSKLRYVSEDIIIRCDNGLNCPAQNYERICHFVSKNAMDIEGLGRKQVAFLIDKRLISNPLDIFFLKEKNETNLIRLENMDGWGKKSVANLFKNIEKSQKISLQRFIYALGIRHIGEQNAKLLAREFGSYNNFIAQMELLSKNDSDIYQKLNDLEGIGDKILVDIVDFFYVKENTQLIKRLGSVLNIEDYQETREQNILTGKIVVFTGSLSTISRVEAKEIAEKLGAKVTASVSLNTDLVIAGVNGGSKLKKAKELNIKIIDEVEWLAFIKNA</sequence>
<proteinExistence type="inferred from homology"/>
<gene>
    <name evidence="1" type="primary">ligA</name>
    <name type="synonym">lig</name>
    <name type="ordered locus">RP720</name>
</gene>
<dbReference type="EC" id="6.5.1.2" evidence="1"/>
<dbReference type="EMBL" id="AJ235273">
    <property type="protein sequence ID" value="CAA15151.1"/>
    <property type="molecule type" value="Genomic_DNA"/>
</dbReference>
<dbReference type="PIR" id="G71631">
    <property type="entry name" value="G71631"/>
</dbReference>
<dbReference type="RefSeq" id="NP_221075.1">
    <property type="nucleotide sequence ID" value="NC_000963.1"/>
</dbReference>
<dbReference type="RefSeq" id="WP_010886358.1">
    <property type="nucleotide sequence ID" value="NC_000963.1"/>
</dbReference>
<dbReference type="SMR" id="Q9ZCK9"/>
<dbReference type="STRING" id="272947.gene:17555792"/>
<dbReference type="EnsemblBacteria" id="CAA15151">
    <property type="protein sequence ID" value="CAA15151"/>
    <property type="gene ID" value="CAA15151"/>
</dbReference>
<dbReference type="GeneID" id="57569843"/>
<dbReference type="KEGG" id="rpr:RP720"/>
<dbReference type="PATRIC" id="fig|272947.5.peg.755"/>
<dbReference type="eggNOG" id="COG0272">
    <property type="taxonomic scope" value="Bacteria"/>
</dbReference>
<dbReference type="HOGENOM" id="CLU_007764_2_1_5"/>
<dbReference type="OrthoDB" id="9759736at2"/>
<dbReference type="Proteomes" id="UP000002480">
    <property type="component" value="Chromosome"/>
</dbReference>
<dbReference type="GO" id="GO:0005829">
    <property type="term" value="C:cytosol"/>
    <property type="evidence" value="ECO:0007669"/>
    <property type="project" value="TreeGrafter"/>
</dbReference>
<dbReference type="GO" id="GO:0003911">
    <property type="term" value="F:DNA ligase (NAD+) activity"/>
    <property type="evidence" value="ECO:0007669"/>
    <property type="project" value="UniProtKB-UniRule"/>
</dbReference>
<dbReference type="GO" id="GO:0046872">
    <property type="term" value="F:metal ion binding"/>
    <property type="evidence" value="ECO:0007669"/>
    <property type="project" value="UniProtKB-KW"/>
</dbReference>
<dbReference type="GO" id="GO:0006281">
    <property type="term" value="P:DNA repair"/>
    <property type="evidence" value="ECO:0007669"/>
    <property type="project" value="UniProtKB-KW"/>
</dbReference>
<dbReference type="GO" id="GO:0006260">
    <property type="term" value="P:DNA replication"/>
    <property type="evidence" value="ECO:0007669"/>
    <property type="project" value="UniProtKB-KW"/>
</dbReference>
<dbReference type="CDD" id="cd17748">
    <property type="entry name" value="BRCT_DNA_ligase_like"/>
    <property type="match status" value="1"/>
</dbReference>
<dbReference type="CDD" id="cd00114">
    <property type="entry name" value="LIGANc"/>
    <property type="match status" value="1"/>
</dbReference>
<dbReference type="FunFam" id="1.10.150.20:FF:000007">
    <property type="entry name" value="DNA ligase"/>
    <property type="match status" value="1"/>
</dbReference>
<dbReference type="FunFam" id="2.40.50.140:FF:000012">
    <property type="entry name" value="DNA ligase"/>
    <property type="match status" value="1"/>
</dbReference>
<dbReference type="FunFam" id="3.30.470.30:FF:000001">
    <property type="entry name" value="DNA ligase"/>
    <property type="match status" value="1"/>
</dbReference>
<dbReference type="Gene3D" id="6.20.10.30">
    <property type="match status" value="1"/>
</dbReference>
<dbReference type="Gene3D" id="1.10.150.20">
    <property type="entry name" value="5' to 3' exonuclease, C-terminal subdomain"/>
    <property type="match status" value="2"/>
</dbReference>
<dbReference type="Gene3D" id="3.40.50.10190">
    <property type="entry name" value="BRCT domain"/>
    <property type="match status" value="1"/>
</dbReference>
<dbReference type="Gene3D" id="3.30.470.30">
    <property type="entry name" value="DNA ligase/mRNA capping enzyme"/>
    <property type="match status" value="1"/>
</dbReference>
<dbReference type="Gene3D" id="1.10.287.610">
    <property type="entry name" value="Helix hairpin bin"/>
    <property type="match status" value="1"/>
</dbReference>
<dbReference type="Gene3D" id="2.40.50.140">
    <property type="entry name" value="Nucleic acid-binding proteins"/>
    <property type="match status" value="1"/>
</dbReference>
<dbReference type="HAMAP" id="MF_01588">
    <property type="entry name" value="DNA_ligase_A"/>
    <property type="match status" value="1"/>
</dbReference>
<dbReference type="InterPro" id="IPR001357">
    <property type="entry name" value="BRCT_dom"/>
</dbReference>
<dbReference type="InterPro" id="IPR036420">
    <property type="entry name" value="BRCT_dom_sf"/>
</dbReference>
<dbReference type="InterPro" id="IPR041663">
    <property type="entry name" value="DisA/LigA_HHH"/>
</dbReference>
<dbReference type="InterPro" id="IPR001679">
    <property type="entry name" value="DNA_ligase"/>
</dbReference>
<dbReference type="InterPro" id="IPR018239">
    <property type="entry name" value="DNA_ligase_AS"/>
</dbReference>
<dbReference type="InterPro" id="IPR033136">
    <property type="entry name" value="DNA_ligase_CS"/>
</dbReference>
<dbReference type="InterPro" id="IPR013839">
    <property type="entry name" value="DNAligase_adenylation"/>
</dbReference>
<dbReference type="InterPro" id="IPR013840">
    <property type="entry name" value="DNAligase_N"/>
</dbReference>
<dbReference type="InterPro" id="IPR012340">
    <property type="entry name" value="NA-bd_OB-fold"/>
</dbReference>
<dbReference type="InterPro" id="IPR004150">
    <property type="entry name" value="NAD_DNA_ligase_OB"/>
</dbReference>
<dbReference type="InterPro" id="IPR010994">
    <property type="entry name" value="RuvA_2-like"/>
</dbReference>
<dbReference type="InterPro" id="IPR004149">
    <property type="entry name" value="Znf_DNAligase_C4"/>
</dbReference>
<dbReference type="NCBIfam" id="TIGR00575">
    <property type="entry name" value="dnlj"/>
    <property type="match status" value="1"/>
</dbReference>
<dbReference type="NCBIfam" id="NF005932">
    <property type="entry name" value="PRK07956.1"/>
    <property type="match status" value="1"/>
</dbReference>
<dbReference type="PANTHER" id="PTHR23389">
    <property type="entry name" value="CHROMOSOME TRANSMISSION FIDELITY FACTOR 18"/>
    <property type="match status" value="1"/>
</dbReference>
<dbReference type="PANTHER" id="PTHR23389:SF9">
    <property type="entry name" value="DNA LIGASE"/>
    <property type="match status" value="1"/>
</dbReference>
<dbReference type="Pfam" id="PF00533">
    <property type="entry name" value="BRCT"/>
    <property type="match status" value="1"/>
</dbReference>
<dbReference type="Pfam" id="PF01653">
    <property type="entry name" value="DNA_ligase_aden"/>
    <property type="match status" value="1"/>
</dbReference>
<dbReference type="Pfam" id="PF03120">
    <property type="entry name" value="DNA_ligase_OB"/>
    <property type="match status" value="1"/>
</dbReference>
<dbReference type="Pfam" id="PF03119">
    <property type="entry name" value="DNA_ligase_ZBD"/>
    <property type="match status" value="1"/>
</dbReference>
<dbReference type="Pfam" id="PF12826">
    <property type="entry name" value="HHH_2"/>
    <property type="match status" value="1"/>
</dbReference>
<dbReference type="PIRSF" id="PIRSF001604">
    <property type="entry name" value="LigA"/>
    <property type="match status" value="1"/>
</dbReference>
<dbReference type="SMART" id="SM00292">
    <property type="entry name" value="BRCT"/>
    <property type="match status" value="1"/>
</dbReference>
<dbReference type="SMART" id="SM00532">
    <property type="entry name" value="LIGANc"/>
    <property type="match status" value="1"/>
</dbReference>
<dbReference type="SUPFAM" id="SSF52113">
    <property type="entry name" value="BRCT domain"/>
    <property type="match status" value="1"/>
</dbReference>
<dbReference type="SUPFAM" id="SSF56091">
    <property type="entry name" value="DNA ligase/mRNA capping enzyme, catalytic domain"/>
    <property type="match status" value="1"/>
</dbReference>
<dbReference type="SUPFAM" id="SSF50249">
    <property type="entry name" value="Nucleic acid-binding proteins"/>
    <property type="match status" value="1"/>
</dbReference>
<dbReference type="SUPFAM" id="SSF47781">
    <property type="entry name" value="RuvA domain 2-like"/>
    <property type="match status" value="1"/>
</dbReference>
<dbReference type="PROSITE" id="PS50172">
    <property type="entry name" value="BRCT"/>
    <property type="match status" value="1"/>
</dbReference>
<dbReference type="PROSITE" id="PS01055">
    <property type="entry name" value="DNA_LIGASE_N1"/>
    <property type="match status" value="1"/>
</dbReference>
<dbReference type="PROSITE" id="PS01056">
    <property type="entry name" value="DNA_LIGASE_N2"/>
    <property type="match status" value="1"/>
</dbReference>
<name>DNLJ_RICPR</name>
<reference key="1">
    <citation type="journal article" date="1998" name="Nature">
        <title>The genome sequence of Rickettsia prowazekii and the origin of mitochondria.</title>
        <authorList>
            <person name="Andersson S.G.E."/>
            <person name="Zomorodipour A."/>
            <person name="Andersson J.O."/>
            <person name="Sicheritz-Ponten T."/>
            <person name="Alsmark U.C.M."/>
            <person name="Podowski R.M."/>
            <person name="Naeslund A.K."/>
            <person name="Eriksson A.-S."/>
            <person name="Winkler H.H."/>
            <person name="Kurland C.G."/>
        </authorList>
    </citation>
    <scope>NUCLEOTIDE SEQUENCE [LARGE SCALE GENOMIC DNA]</scope>
    <source>
        <strain>Madrid E</strain>
    </source>
</reference>
<accession>Q9ZCK9</accession>